<evidence type="ECO:0000255" key="1">
    <source>
        <dbReference type="HAMAP-Rule" id="MF_01338"/>
    </source>
</evidence>
<sequence length="488" mass="54179">MSNSVEERTRIKNERYESGVIPYAKMGYWDPEYAVKDTDILALFRVSPQPGVDPIEASAAVAGESSTATWTVVWTDLLTACDLYRAKAYKVDAVPNTSDQYFAYIAYDIDLFEEGSIANLTASIIGNVFGFKAIKALRLEDMRIPVAYLKTIQGPATGIIVERERMDKFGRPFLGPTVKPKLGLSGKNYGRVVYEGLRGGLDFLKDDENINSQPFMRWKERFLYSMEAVNRSIAATGEVKGHYMNVTASTMEDMYERAEFAKQLGTVIIMIDLVIGYTAIQSMGIWARKNDMILHLHRAGNSTYSRQKIHGMNFRVICKWMRMAGVDHIHAGTVVGKLEGDPLMIRGFYNTLLLSELAIDLPKGIFFEQDWAALRKVTPVASGGIHCGQMHQLLDYLGNDVVLQFGGGTIGHPDGIQAGATANRVALESMVIARNEERDYVAEGPQILLDAAKTCGPLQTALDLWKDITFNYTSTDTADFVETPTANV</sequence>
<dbReference type="EC" id="4.1.1.39" evidence="1"/>
<dbReference type="EMBL" id="X54532">
    <property type="protein sequence ID" value="CAA38398.1"/>
    <property type="molecule type" value="Genomic_DNA"/>
</dbReference>
<dbReference type="PIR" id="S14126">
    <property type="entry name" value="RKKKLA"/>
</dbReference>
<dbReference type="SMR" id="P24624"/>
<dbReference type="GO" id="GO:0009507">
    <property type="term" value="C:chloroplast"/>
    <property type="evidence" value="ECO:0007669"/>
    <property type="project" value="UniProtKB-SubCell"/>
</dbReference>
<dbReference type="GO" id="GO:0000287">
    <property type="term" value="F:magnesium ion binding"/>
    <property type="evidence" value="ECO:0007669"/>
    <property type="project" value="UniProtKB-UniRule"/>
</dbReference>
<dbReference type="GO" id="GO:0004497">
    <property type="term" value="F:monooxygenase activity"/>
    <property type="evidence" value="ECO:0007669"/>
    <property type="project" value="UniProtKB-KW"/>
</dbReference>
<dbReference type="GO" id="GO:0016984">
    <property type="term" value="F:ribulose-bisphosphate carboxylase activity"/>
    <property type="evidence" value="ECO:0007669"/>
    <property type="project" value="UniProtKB-UniRule"/>
</dbReference>
<dbReference type="GO" id="GO:0019253">
    <property type="term" value="P:reductive pentose-phosphate cycle"/>
    <property type="evidence" value="ECO:0007669"/>
    <property type="project" value="UniProtKB-UniRule"/>
</dbReference>
<dbReference type="CDD" id="cd08212">
    <property type="entry name" value="RuBisCO_large_I"/>
    <property type="match status" value="1"/>
</dbReference>
<dbReference type="Gene3D" id="3.20.20.110">
    <property type="entry name" value="Ribulose bisphosphate carboxylase, large subunit, C-terminal domain"/>
    <property type="match status" value="1"/>
</dbReference>
<dbReference type="Gene3D" id="3.30.70.150">
    <property type="entry name" value="RuBisCO large subunit, N-terminal domain"/>
    <property type="match status" value="1"/>
</dbReference>
<dbReference type="HAMAP" id="MF_01338">
    <property type="entry name" value="RuBisCO_L_type1"/>
    <property type="match status" value="1"/>
</dbReference>
<dbReference type="InterPro" id="IPR033966">
    <property type="entry name" value="RuBisCO"/>
</dbReference>
<dbReference type="InterPro" id="IPR020878">
    <property type="entry name" value="RuBisCo_large_chain_AS"/>
</dbReference>
<dbReference type="InterPro" id="IPR000685">
    <property type="entry name" value="RuBisCO_lsu_C"/>
</dbReference>
<dbReference type="InterPro" id="IPR036376">
    <property type="entry name" value="RuBisCO_lsu_C_sf"/>
</dbReference>
<dbReference type="InterPro" id="IPR017443">
    <property type="entry name" value="RuBisCO_lsu_fd_N"/>
</dbReference>
<dbReference type="InterPro" id="IPR036422">
    <property type="entry name" value="RuBisCO_lsu_N_sf"/>
</dbReference>
<dbReference type="InterPro" id="IPR020888">
    <property type="entry name" value="RuBisCO_lsuI"/>
</dbReference>
<dbReference type="NCBIfam" id="NF003252">
    <property type="entry name" value="PRK04208.1"/>
    <property type="match status" value="1"/>
</dbReference>
<dbReference type="PANTHER" id="PTHR42704">
    <property type="entry name" value="RIBULOSE BISPHOSPHATE CARBOXYLASE"/>
    <property type="match status" value="1"/>
</dbReference>
<dbReference type="PANTHER" id="PTHR42704:SF17">
    <property type="entry name" value="RIBULOSE BISPHOSPHATE CARBOXYLASE LARGE CHAIN"/>
    <property type="match status" value="1"/>
</dbReference>
<dbReference type="Pfam" id="PF00016">
    <property type="entry name" value="RuBisCO_large"/>
    <property type="match status" value="1"/>
</dbReference>
<dbReference type="Pfam" id="PF02788">
    <property type="entry name" value="RuBisCO_large_N"/>
    <property type="match status" value="1"/>
</dbReference>
<dbReference type="SFLD" id="SFLDG01052">
    <property type="entry name" value="RuBisCO"/>
    <property type="match status" value="1"/>
</dbReference>
<dbReference type="SFLD" id="SFLDS00014">
    <property type="entry name" value="RuBisCO"/>
    <property type="match status" value="1"/>
</dbReference>
<dbReference type="SFLD" id="SFLDG00301">
    <property type="entry name" value="RuBisCO-like_proteins"/>
    <property type="match status" value="1"/>
</dbReference>
<dbReference type="SUPFAM" id="SSF51649">
    <property type="entry name" value="RuBisCo, C-terminal domain"/>
    <property type="match status" value="1"/>
</dbReference>
<dbReference type="SUPFAM" id="SSF54966">
    <property type="entry name" value="RuBisCO, large subunit, small (N-terminal) domain"/>
    <property type="match status" value="1"/>
</dbReference>
<dbReference type="PROSITE" id="PS00157">
    <property type="entry name" value="RUBISCO_LARGE"/>
    <property type="match status" value="1"/>
</dbReference>
<comment type="function">
    <text evidence="1">RuBisCO catalyzes two reactions: the carboxylation of D-ribulose 1,5-bisphosphate, the primary event in carbon dioxide fixation, as well as the oxidative fragmentation of the pentose substrate in the photorespiration process. Both reactions occur simultaneously and in competition at the same active site.</text>
</comment>
<comment type="catalytic activity">
    <reaction evidence="1">
        <text>2 (2R)-3-phosphoglycerate + 2 H(+) = D-ribulose 1,5-bisphosphate + CO2 + H2O</text>
        <dbReference type="Rhea" id="RHEA:23124"/>
        <dbReference type="ChEBI" id="CHEBI:15377"/>
        <dbReference type="ChEBI" id="CHEBI:15378"/>
        <dbReference type="ChEBI" id="CHEBI:16526"/>
        <dbReference type="ChEBI" id="CHEBI:57870"/>
        <dbReference type="ChEBI" id="CHEBI:58272"/>
        <dbReference type="EC" id="4.1.1.39"/>
    </reaction>
</comment>
<comment type="catalytic activity">
    <reaction evidence="1">
        <text>D-ribulose 1,5-bisphosphate + O2 = 2-phosphoglycolate + (2R)-3-phosphoglycerate + 2 H(+)</text>
        <dbReference type="Rhea" id="RHEA:36631"/>
        <dbReference type="ChEBI" id="CHEBI:15378"/>
        <dbReference type="ChEBI" id="CHEBI:15379"/>
        <dbReference type="ChEBI" id="CHEBI:57870"/>
        <dbReference type="ChEBI" id="CHEBI:58033"/>
        <dbReference type="ChEBI" id="CHEBI:58272"/>
    </reaction>
</comment>
<comment type="cofactor">
    <cofactor evidence="1">
        <name>Mg(2+)</name>
        <dbReference type="ChEBI" id="CHEBI:18420"/>
    </cofactor>
    <text evidence="1">Binds 1 Mg(2+) ion per subunit.</text>
</comment>
<comment type="subunit">
    <text evidence="1">Heterohexadecamer of 8 large chains and 8 small chains.</text>
</comment>
<comment type="subcellular location">
    <subcellularLocation>
        <location>Plastid</location>
        <location>Chloroplast</location>
    </subcellularLocation>
</comment>
<comment type="miscellaneous">
    <text evidence="1">The basic functional RuBisCO is composed of a large chain homodimer in a 'head-to-tail' conformation. In form I RuBisCO this homodimer is arranged in a barrel-like tetramer with the small subunits forming a tetrameric 'cap' on each end of the 'barrel'.</text>
</comment>
<comment type="similarity">
    <text evidence="1">Belongs to the RuBisCO large chain family. Type I subfamily.</text>
</comment>
<name>RBL_ANTSP</name>
<protein>
    <recommendedName>
        <fullName evidence="1">Ribulose bisphosphate carboxylase large chain</fullName>
        <shortName evidence="1">RuBisCO large subunit</shortName>
        <ecNumber evidence="1">4.1.1.39</ecNumber>
    </recommendedName>
</protein>
<reference key="1">
    <citation type="journal article" date="1990" name="Curr. Genet.">
        <title>Structure of the rubisco operon from the multicellular red alga Antithamnion spec.</title>
        <authorList>
            <person name="Kostrzewa M."/>
            <person name="Valentin K.-U."/>
            <person name="Maid U."/>
            <person name="Radetzky R."/>
            <person name="Zetsche K."/>
        </authorList>
    </citation>
    <scope>NUCLEOTIDE SEQUENCE [GENOMIC DNA]</scope>
</reference>
<gene>
    <name evidence="1" type="primary">rbcL</name>
</gene>
<keyword id="KW-0113">Calvin cycle</keyword>
<keyword id="KW-0120">Carbon dioxide fixation</keyword>
<keyword id="KW-0150">Chloroplast</keyword>
<keyword id="KW-0456">Lyase</keyword>
<keyword id="KW-0460">Magnesium</keyword>
<keyword id="KW-0479">Metal-binding</keyword>
<keyword id="KW-0503">Monooxygenase</keyword>
<keyword id="KW-0560">Oxidoreductase</keyword>
<keyword id="KW-0601">Photorespiration</keyword>
<keyword id="KW-0602">Photosynthesis</keyword>
<keyword id="KW-0934">Plastid</keyword>
<proteinExistence type="inferred from homology"/>
<geneLocation type="chloroplast"/>
<feature type="chain" id="PRO_0000062356" description="Ribulose bisphosphate carboxylase large chain">
    <location>
        <begin position="1"/>
        <end position="488"/>
    </location>
</feature>
<feature type="active site" description="Proton acceptor" evidence="1">
    <location>
        <position position="179"/>
    </location>
</feature>
<feature type="active site" description="Proton acceptor" evidence="1">
    <location>
        <position position="297"/>
    </location>
</feature>
<feature type="binding site" description="in homodimeric partner" evidence="1">
    <location>
        <position position="127"/>
    </location>
    <ligand>
        <name>substrate</name>
    </ligand>
</feature>
<feature type="binding site" evidence="1">
    <location>
        <position position="177"/>
    </location>
    <ligand>
        <name>substrate</name>
    </ligand>
</feature>
<feature type="binding site" evidence="1">
    <location>
        <position position="181"/>
    </location>
    <ligand>
        <name>substrate</name>
    </ligand>
</feature>
<feature type="binding site" description="via carbamate group" evidence="1">
    <location>
        <position position="205"/>
    </location>
    <ligand>
        <name>Mg(2+)</name>
        <dbReference type="ChEBI" id="CHEBI:18420"/>
    </ligand>
</feature>
<feature type="binding site" evidence="1">
    <location>
        <position position="207"/>
    </location>
    <ligand>
        <name>Mg(2+)</name>
        <dbReference type="ChEBI" id="CHEBI:18420"/>
    </ligand>
</feature>
<feature type="binding site" evidence="1">
    <location>
        <position position="208"/>
    </location>
    <ligand>
        <name>Mg(2+)</name>
        <dbReference type="ChEBI" id="CHEBI:18420"/>
    </ligand>
</feature>
<feature type="binding site" evidence="1">
    <location>
        <position position="298"/>
    </location>
    <ligand>
        <name>substrate</name>
    </ligand>
</feature>
<feature type="binding site" evidence="1">
    <location>
        <position position="330"/>
    </location>
    <ligand>
        <name>substrate</name>
    </ligand>
</feature>
<feature type="binding site" evidence="1">
    <location>
        <position position="382"/>
    </location>
    <ligand>
        <name>substrate</name>
    </ligand>
</feature>
<feature type="site" description="Transition state stabilizer" evidence="1">
    <location>
        <position position="337"/>
    </location>
</feature>
<feature type="modified residue" description="N6-carboxylysine" evidence="1">
    <location>
        <position position="205"/>
    </location>
</feature>
<accession>P24624</accession>
<organism>
    <name type="scientific">Antithamnion sp.</name>
    <name type="common">Red alga</name>
    <dbReference type="NCBI Taxonomy" id="2767"/>
    <lineage>
        <taxon>Eukaryota</taxon>
        <taxon>Rhodophyta</taxon>
        <taxon>Florideophyceae</taxon>
        <taxon>Rhodymeniophycidae</taxon>
        <taxon>Ceramiales</taxon>
        <taxon>Ceramiaceae</taxon>
        <taxon>Antithamnion</taxon>
    </lineage>
</organism>